<organism>
    <name type="scientific">Thermotoga maritima (strain ATCC 43589 / DSM 3109 / JCM 10099 / NBRC 100826 / MSB8)</name>
    <dbReference type="NCBI Taxonomy" id="243274"/>
    <lineage>
        <taxon>Bacteria</taxon>
        <taxon>Thermotogati</taxon>
        <taxon>Thermotogota</taxon>
        <taxon>Thermotogae</taxon>
        <taxon>Thermotogales</taxon>
        <taxon>Thermotogaceae</taxon>
        <taxon>Thermotoga</taxon>
    </lineage>
</organism>
<sequence length="376" mass="42200">MEERTLVILGATGSIGTQTLDVLKKVKGIRLIGISFHSNLELAFKIVKEFNVKNVAITGDVEFEDSSINVWKGSHSIEEMLEALKPDITMVAVSGFSGLRAVLASLEHSKRVCLANKESLVCGGFLVKKKLKEKGTELIPVDSEHSAIFQVMEPEVEKVVLTASGGALRDWKISKIDRARPEDVLKHPVWNMGARITVDSATMVNKAFEVLEAMELFELPFEKIEVKIHREGLVHGAVVLPDGNVKMVVSPPDMRIPISYALFYPRRVALEPFFLRTISLSFEDPDPEKYPAFFLLKEIKDSYALRTAFNAADEVAVEAFLKGRIRFGGIHRVIEKTLEEFQGYPQPRTLDDVERIHFEAIKKAERVTEWLSSTSY</sequence>
<reference key="1">
    <citation type="journal article" date="1999" name="Nature">
        <title>Evidence for lateral gene transfer between Archaea and Bacteria from genome sequence of Thermotoga maritima.</title>
        <authorList>
            <person name="Nelson K.E."/>
            <person name="Clayton R.A."/>
            <person name="Gill S.R."/>
            <person name="Gwinn M.L."/>
            <person name="Dodson R.J."/>
            <person name="Haft D.H."/>
            <person name="Hickey E.K."/>
            <person name="Peterson J.D."/>
            <person name="Nelson W.C."/>
            <person name="Ketchum K.A."/>
            <person name="McDonald L.A."/>
            <person name="Utterback T.R."/>
            <person name="Malek J.A."/>
            <person name="Linher K.D."/>
            <person name="Garrett M.M."/>
            <person name="Stewart A.M."/>
            <person name="Cotton M.D."/>
            <person name="Pratt M.S."/>
            <person name="Phillips C.A."/>
            <person name="Richardson D.L."/>
            <person name="Heidelberg J.F."/>
            <person name="Sutton G.G."/>
            <person name="Fleischmann R.D."/>
            <person name="Eisen J.A."/>
            <person name="White O."/>
            <person name="Salzberg S.L."/>
            <person name="Smith H.O."/>
            <person name="Venter J.C."/>
            <person name="Fraser C.M."/>
        </authorList>
    </citation>
    <scope>NUCLEOTIDE SEQUENCE [LARGE SCALE GENOMIC DNA]</scope>
    <source>
        <strain>ATCC 43589 / DSM 3109 / JCM 10099 / NBRC 100826 / MSB8</strain>
    </source>
</reference>
<proteinExistence type="evidence at protein level"/>
<keyword id="KW-0002">3D-structure</keyword>
<keyword id="KW-0414">Isoprene biosynthesis</keyword>
<keyword id="KW-0464">Manganese</keyword>
<keyword id="KW-0479">Metal-binding</keyword>
<keyword id="KW-0521">NADP</keyword>
<keyword id="KW-0560">Oxidoreductase</keyword>
<keyword id="KW-1185">Reference proteome</keyword>
<gene>
    <name evidence="1" type="primary">dxr</name>
    <name type="ordered locus">TM_0889</name>
</gene>
<protein>
    <recommendedName>
        <fullName evidence="1">1-deoxy-D-xylulose 5-phosphate reductoisomerase</fullName>
        <shortName evidence="1">DXP reductoisomerase</shortName>
        <ecNumber evidence="1">1.1.1.267</ecNumber>
    </recommendedName>
    <alternativeName>
        <fullName evidence="1">1-deoxyxylulose-5-phosphate reductoisomerase</fullName>
    </alternativeName>
    <alternativeName>
        <fullName evidence="1">2-C-methyl-D-erythritol 4-phosphate synthase</fullName>
    </alternativeName>
</protein>
<dbReference type="EC" id="1.1.1.267" evidence="1"/>
<dbReference type="EMBL" id="AE000512">
    <property type="protein sequence ID" value="AAD35970.1"/>
    <property type="molecule type" value="Genomic_DNA"/>
</dbReference>
<dbReference type="PIR" id="B72321">
    <property type="entry name" value="B72321"/>
</dbReference>
<dbReference type="RefSeq" id="NP_228697.1">
    <property type="nucleotide sequence ID" value="NC_000853.1"/>
</dbReference>
<dbReference type="RefSeq" id="WP_004080699.1">
    <property type="nucleotide sequence ID" value="NZ_CP011107.1"/>
</dbReference>
<dbReference type="PDB" id="3A06">
    <property type="method" value="X-ray"/>
    <property type="resolution" value="2.00 A"/>
    <property type="chains" value="A/B=1-376"/>
</dbReference>
<dbReference type="PDB" id="3A14">
    <property type="method" value="X-ray"/>
    <property type="resolution" value="2.00 A"/>
    <property type="chains" value="A/B=1-376"/>
</dbReference>
<dbReference type="PDBsum" id="3A06"/>
<dbReference type="PDBsum" id="3A14"/>
<dbReference type="SMR" id="Q9WZZ1"/>
<dbReference type="FunCoup" id="Q9WZZ1">
    <property type="interactions" value="385"/>
</dbReference>
<dbReference type="STRING" id="243274.TM_0889"/>
<dbReference type="PaxDb" id="243274-THEMA_00190"/>
<dbReference type="EnsemblBacteria" id="AAD35970">
    <property type="protein sequence ID" value="AAD35970"/>
    <property type="gene ID" value="TM_0889"/>
</dbReference>
<dbReference type="KEGG" id="tma:TM0889"/>
<dbReference type="KEGG" id="tmi:THEMA_00190"/>
<dbReference type="KEGG" id="tmm:Tmari_0891"/>
<dbReference type="KEGG" id="tmw:THMA_0911"/>
<dbReference type="eggNOG" id="COG0743">
    <property type="taxonomic scope" value="Bacteria"/>
</dbReference>
<dbReference type="InParanoid" id="Q9WZZ1"/>
<dbReference type="OrthoDB" id="9806546at2"/>
<dbReference type="BRENDA" id="1.1.1.267">
    <property type="organism ID" value="6331"/>
</dbReference>
<dbReference type="UniPathway" id="UPA00056">
    <property type="reaction ID" value="UER00092"/>
</dbReference>
<dbReference type="EvolutionaryTrace" id="Q9WZZ1"/>
<dbReference type="Proteomes" id="UP000008183">
    <property type="component" value="Chromosome"/>
</dbReference>
<dbReference type="GO" id="GO:0030604">
    <property type="term" value="F:1-deoxy-D-xylulose-5-phosphate reductoisomerase activity"/>
    <property type="evidence" value="ECO:0000318"/>
    <property type="project" value="GO_Central"/>
</dbReference>
<dbReference type="GO" id="GO:0030145">
    <property type="term" value="F:manganese ion binding"/>
    <property type="evidence" value="ECO:0000318"/>
    <property type="project" value="GO_Central"/>
</dbReference>
<dbReference type="GO" id="GO:0070402">
    <property type="term" value="F:NADPH binding"/>
    <property type="evidence" value="ECO:0000318"/>
    <property type="project" value="GO_Central"/>
</dbReference>
<dbReference type="GO" id="GO:0051484">
    <property type="term" value="P:isopentenyl diphosphate biosynthetic process, methylerythritol 4-phosphate pathway involved in terpenoid biosynthetic process"/>
    <property type="evidence" value="ECO:0000318"/>
    <property type="project" value="GO_Central"/>
</dbReference>
<dbReference type="FunFam" id="3.40.50.720:FF:000045">
    <property type="entry name" value="1-deoxy-D-xylulose 5-phosphate reductoisomerase"/>
    <property type="match status" value="1"/>
</dbReference>
<dbReference type="Gene3D" id="1.10.1740.10">
    <property type="match status" value="1"/>
</dbReference>
<dbReference type="Gene3D" id="3.40.50.720">
    <property type="entry name" value="NAD(P)-binding Rossmann-like Domain"/>
    <property type="match status" value="1"/>
</dbReference>
<dbReference type="HAMAP" id="MF_00183">
    <property type="entry name" value="DXP_reductoisom"/>
    <property type="match status" value="1"/>
</dbReference>
<dbReference type="InterPro" id="IPR003821">
    <property type="entry name" value="DXP_reductoisomerase"/>
</dbReference>
<dbReference type="InterPro" id="IPR013644">
    <property type="entry name" value="DXP_reductoisomerase_C"/>
</dbReference>
<dbReference type="InterPro" id="IPR013512">
    <property type="entry name" value="DXP_reductoisomerase_N"/>
</dbReference>
<dbReference type="InterPro" id="IPR026877">
    <property type="entry name" value="DXPR_C"/>
</dbReference>
<dbReference type="InterPro" id="IPR036169">
    <property type="entry name" value="DXPR_C_sf"/>
</dbReference>
<dbReference type="InterPro" id="IPR036291">
    <property type="entry name" value="NAD(P)-bd_dom_sf"/>
</dbReference>
<dbReference type="NCBIfam" id="TIGR00243">
    <property type="entry name" value="Dxr"/>
    <property type="match status" value="1"/>
</dbReference>
<dbReference type="PANTHER" id="PTHR30525">
    <property type="entry name" value="1-DEOXY-D-XYLULOSE 5-PHOSPHATE REDUCTOISOMERASE"/>
    <property type="match status" value="1"/>
</dbReference>
<dbReference type="PANTHER" id="PTHR30525:SF0">
    <property type="entry name" value="1-DEOXY-D-XYLULOSE 5-PHOSPHATE REDUCTOISOMERASE, CHLOROPLASTIC"/>
    <property type="match status" value="1"/>
</dbReference>
<dbReference type="Pfam" id="PF08436">
    <property type="entry name" value="DXP_redisom_C"/>
    <property type="match status" value="1"/>
</dbReference>
<dbReference type="Pfam" id="PF02670">
    <property type="entry name" value="DXP_reductoisom"/>
    <property type="match status" value="1"/>
</dbReference>
<dbReference type="Pfam" id="PF13288">
    <property type="entry name" value="DXPR_C"/>
    <property type="match status" value="1"/>
</dbReference>
<dbReference type="PIRSF" id="PIRSF006205">
    <property type="entry name" value="Dxp_reductismrs"/>
    <property type="match status" value="1"/>
</dbReference>
<dbReference type="SUPFAM" id="SSF69055">
    <property type="entry name" value="1-deoxy-D-xylulose-5-phosphate reductoisomerase, C-terminal domain"/>
    <property type="match status" value="1"/>
</dbReference>
<dbReference type="SUPFAM" id="SSF55347">
    <property type="entry name" value="Glyceraldehyde-3-phosphate dehydrogenase-like, C-terminal domain"/>
    <property type="match status" value="1"/>
</dbReference>
<dbReference type="SUPFAM" id="SSF51735">
    <property type="entry name" value="NAD(P)-binding Rossmann-fold domains"/>
    <property type="match status" value="1"/>
</dbReference>
<feature type="chain" id="PRO_0000163723" description="1-deoxy-D-xylulose 5-phosphate reductoisomerase">
    <location>
        <begin position="1"/>
        <end position="376"/>
    </location>
</feature>
<feature type="binding site" evidence="1">
    <location>
        <position position="12"/>
    </location>
    <ligand>
        <name>NADPH</name>
        <dbReference type="ChEBI" id="CHEBI:57783"/>
    </ligand>
</feature>
<feature type="binding site" evidence="1">
    <location>
        <position position="13"/>
    </location>
    <ligand>
        <name>NADPH</name>
        <dbReference type="ChEBI" id="CHEBI:57783"/>
    </ligand>
</feature>
<feature type="binding site" evidence="1">
    <location>
        <position position="14"/>
    </location>
    <ligand>
        <name>NADPH</name>
        <dbReference type="ChEBI" id="CHEBI:57783"/>
    </ligand>
</feature>
<feature type="binding site" evidence="1">
    <location>
        <position position="15"/>
    </location>
    <ligand>
        <name>NADPH</name>
        <dbReference type="ChEBI" id="CHEBI:57783"/>
    </ligand>
</feature>
<feature type="binding site" evidence="1">
    <location>
        <position position="39"/>
    </location>
    <ligand>
        <name>NADPH</name>
        <dbReference type="ChEBI" id="CHEBI:57783"/>
    </ligand>
</feature>
<feature type="binding site" evidence="1">
    <location>
        <position position="116"/>
    </location>
    <ligand>
        <name>NADPH</name>
        <dbReference type="ChEBI" id="CHEBI:57783"/>
    </ligand>
</feature>
<feature type="binding site" evidence="1">
    <location>
        <position position="117"/>
    </location>
    <ligand>
        <name>1-deoxy-D-xylulose 5-phosphate</name>
        <dbReference type="ChEBI" id="CHEBI:57792"/>
    </ligand>
</feature>
<feature type="binding site" evidence="1">
    <location>
        <position position="118"/>
    </location>
    <ligand>
        <name>NADPH</name>
        <dbReference type="ChEBI" id="CHEBI:57783"/>
    </ligand>
</feature>
<feature type="binding site" evidence="1">
    <location>
        <position position="142"/>
    </location>
    <ligand>
        <name>Mn(2+)</name>
        <dbReference type="ChEBI" id="CHEBI:29035"/>
    </ligand>
</feature>
<feature type="binding site" evidence="1">
    <location>
        <position position="143"/>
    </location>
    <ligand>
        <name>1-deoxy-D-xylulose 5-phosphate</name>
        <dbReference type="ChEBI" id="CHEBI:57792"/>
    </ligand>
</feature>
<feature type="binding site" evidence="1">
    <location>
        <position position="144"/>
    </location>
    <ligand>
        <name>1-deoxy-D-xylulose 5-phosphate</name>
        <dbReference type="ChEBI" id="CHEBI:57792"/>
    </ligand>
</feature>
<feature type="binding site" evidence="1">
    <location>
        <position position="144"/>
    </location>
    <ligand>
        <name>Mn(2+)</name>
        <dbReference type="ChEBI" id="CHEBI:29035"/>
    </ligand>
</feature>
<feature type="binding site" evidence="1">
    <location>
        <position position="164"/>
    </location>
    <ligand>
        <name>1-deoxy-D-xylulose 5-phosphate</name>
        <dbReference type="ChEBI" id="CHEBI:57792"/>
    </ligand>
</feature>
<feature type="binding site" evidence="1">
    <location>
        <position position="187"/>
    </location>
    <ligand>
        <name>1-deoxy-D-xylulose 5-phosphate</name>
        <dbReference type="ChEBI" id="CHEBI:57792"/>
    </ligand>
</feature>
<feature type="binding site" evidence="1">
    <location>
        <position position="193"/>
    </location>
    <ligand>
        <name>NADPH</name>
        <dbReference type="ChEBI" id="CHEBI:57783"/>
    </ligand>
</feature>
<feature type="binding site" evidence="1">
    <location>
        <position position="200"/>
    </location>
    <ligand>
        <name>1-deoxy-D-xylulose 5-phosphate</name>
        <dbReference type="ChEBI" id="CHEBI:57792"/>
    </ligand>
</feature>
<feature type="binding site" evidence="1">
    <location>
        <position position="205"/>
    </location>
    <ligand>
        <name>1-deoxy-D-xylulose 5-phosphate</name>
        <dbReference type="ChEBI" id="CHEBI:57792"/>
    </ligand>
</feature>
<feature type="binding site" evidence="1">
    <location>
        <position position="206"/>
    </location>
    <ligand>
        <name>1-deoxy-D-xylulose 5-phosphate</name>
        <dbReference type="ChEBI" id="CHEBI:57792"/>
    </ligand>
</feature>
<feature type="binding site" evidence="1">
    <location>
        <position position="209"/>
    </location>
    <ligand>
        <name>1-deoxy-D-xylulose 5-phosphate</name>
        <dbReference type="ChEBI" id="CHEBI:57792"/>
    </ligand>
</feature>
<feature type="binding site" evidence="1">
    <location>
        <position position="209"/>
    </location>
    <ligand>
        <name>Mn(2+)</name>
        <dbReference type="ChEBI" id="CHEBI:29035"/>
    </ligand>
</feature>
<feature type="strand" evidence="2">
    <location>
        <begin position="4"/>
        <end position="9"/>
    </location>
</feature>
<feature type="turn" evidence="2">
    <location>
        <begin position="10"/>
        <end position="12"/>
    </location>
</feature>
<feature type="helix" evidence="2">
    <location>
        <begin position="14"/>
        <end position="25"/>
    </location>
</feature>
<feature type="strand" evidence="2">
    <location>
        <begin position="28"/>
        <end position="38"/>
    </location>
</feature>
<feature type="helix" evidence="2">
    <location>
        <begin position="40"/>
        <end position="50"/>
    </location>
</feature>
<feature type="strand" evidence="2">
    <location>
        <begin position="54"/>
        <end position="57"/>
    </location>
</feature>
<feature type="strand" evidence="2">
    <location>
        <begin position="66"/>
        <end position="73"/>
    </location>
</feature>
<feature type="helix" evidence="2">
    <location>
        <begin position="76"/>
        <end position="84"/>
    </location>
</feature>
<feature type="strand" evidence="2">
    <location>
        <begin position="87"/>
        <end position="91"/>
    </location>
</feature>
<feature type="helix" evidence="2">
    <location>
        <begin position="98"/>
        <end position="108"/>
    </location>
</feature>
<feature type="strand" evidence="2">
    <location>
        <begin position="110"/>
        <end position="114"/>
    </location>
</feature>
<feature type="helix" evidence="2">
    <location>
        <begin position="118"/>
        <end position="134"/>
    </location>
</feature>
<feature type="strand" evidence="2">
    <location>
        <begin position="137"/>
        <end position="140"/>
    </location>
</feature>
<feature type="helix" evidence="2">
    <location>
        <begin position="143"/>
        <end position="151"/>
    </location>
</feature>
<feature type="strand" evidence="2">
    <location>
        <begin position="157"/>
        <end position="163"/>
    </location>
</feature>
<feature type="strand" evidence="2">
    <location>
        <begin position="169"/>
        <end position="171"/>
    </location>
</feature>
<feature type="helix" evidence="2">
    <location>
        <begin position="173"/>
        <end position="176"/>
    </location>
</feature>
<feature type="helix" evidence="2">
    <location>
        <begin position="181"/>
        <end position="183"/>
    </location>
</feature>
<feature type="helix" evidence="2">
    <location>
        <begin position="194"/>
        <end position="202"/>
    </location>
</feature>
<feature type="helix" evidence="2">
    <location>
        <begin position="204"/>
        <end position="217"/>
    </location>
</feature>
<feature type="helix" evidence="2">
    <location>
        <begin position="221"/>
        <end position="223"/>
    </location>
</feature>
<feature type="strand" evidence="2">
    <location>
        <begin position="224"/>
        <end position="228"/>
    </location>
</feature>
<feature type="strand" evidence="2">
    <location>
        <begin position="234"/>
        <end position="239"/>
    </location>
</feature>
<feature type="strand" evidence="2">
    <location>
        <begin position="245"/>
        <end position="249"/>
    </location>
</feature>
<feature type="helix" evidence="2">
    <location>
        <begin position="255"/>
        <end position="263"/>
    </location>
</feature>
<feature type="strand" evidence="2">
    <location>
        <begin position="278"/>
        <end position="280"/>
    </location>
</feature>
<feature type="turn" evidence="2">
    <location>
        <begin position="287"/>
        <end position="289"/>
    </location>
</feature>
<feature type="helix" evidence="2">
    <location>
        <begin position="293"/>
        <end position="295"/>
    </location>
</feature>
<feature type="helix" evidence="2">
    <location>
        <begin position="296"/>
        <end position="299"/>
    </location>
</feature>
<feature type="helix" evidence="2">
    <location>
        <begin position="303"/>
        <end position="321"/>
    </location>
</feature>
<feature type="helix" evidence="2">
    <location>
        <begin position="329"/>
        <end position="339"/>
    </location>
</feature>
<feature type="turn" evidence="2">
    <location>
        <begin position="340"/>
        <end position="343"/>
    </location>
</feature>
<feature type="helix" evidence="2">
    <location>
        <begin position="350"/>
        <end position="371"/>
    </location>
</feature>
<accession>Q9WZZ1</accession>
<evidence type="ECO:0000255" key="1">
    <source>
        <dbReference type="HAMAP-Rule" id="MF_00183"/>
    </source>
</evidence>
<evidence type="ECO:0007829" key="2">
    <source>
        <dbReference type="PDB" id="3A06"/>
    </source>
</evidence>
<name>DXR_THEMA</name>
<comment type="function">
    <text evidence="1">Catalyzes the NADPH-dependent rearrangement and reduction of 1-deoxy-D-xylulose-5-phosphate (DXP) to 2-C-methyl-D-erythritol 4-phosphate (MEP).</text>
</comment>
<comment type="catalytic activity">
    <reaction evidence="1">
        <text>2-C-methyl-D-erythritol 4-phosphate + NADP(+) = 1-deoxy-D-xylulose 5-phosphate + NADPH + H(+)</text>
        <dbReference type="Rhea" id="RHEA:13717"/>
        <dbReference type="ChEBI" id="CHEBI:15378"/>
        <dbReference type="ChEBI" id="CHEBI:57783"/>
        <dbReference type="ChEBI" id="CHEBI:57792"/>
        <dbReference type="ChEBI" id="CHEBI:58262"/>
        <dbReference type="ChEBI" id="CHEBI:58349"/>
        <dbReference type="EC" id="1.1.1.267"/>
    </reaction>
    <physiologicalReaction direction="right-to-left" evidence="1">
        <dbReference type="Rhea" id="RHEA:13719"/>
    </physiologicalReaction>
</comment>
<comment type="cofactor">
    <cofactor evidence="1">
        <name>Mg(2+)</name>
        <dbReference type="ChEBI" id="CHEBI:18420"/>
    </cofactor>
    <cofactor evidence="1">
        <name>Mn(2+)</name>
        <dbReference type="ChEBI" id="CHEBI:29035"/>
    </cofactor>
</comment>
<comment type="pathway">
    <text evidence="1">Isoprenoid biosynthesis; isopentenyl diphosphate biosynthesis via DXP pathway; isopentenyl diphosphate from 1-deoxy-D-xylulose 5-phosphate: step 1/6.</text>
</comment>
<comment type="similarity">
    <text evidence="1">Belongs to the DXR family.</text>
</comment>